<proteinExistence type="inferred from homology"/>
<feature type="chain" id="PRO_1000051106" description="Small ribosomal subunit protein uS19">
    <location>
        <begin position="1"/>
        <end position="91"/>
    </location>
</feature>
<keyword id="KW-0687">Ribonucleoprotein</keyword>
<keyword id="KW-0689">Ribosomal protein</keyword>
<keyword id="KW-0694">RNA-binding</keyword>
<keyword id="KW-0699">rRNA-binding</keyword>
<evidence type="ECO:0000255" key="1">
    <source>
        <dbReference type="HAMAP-Rule" id="MF_00531"/>
    </source>
</evidence>
<evidence type="ECO:0000305" key="2"/>
<name>RS19_PSEP1</name>
<organism>
    <name type="scientific">Pseudomonas putida (strain ATCC 700007 / DSM 6899 / JCM 31910 / BCRC 17059 / LMG 24140 / F1)</name>
    <dbReference type="NCBI Taxonomy" id="351746"/>
    <lineage>
        <taxon>Bacteria</taxon>
        <taxon>Pseudomonadati</taxon>
        <taxon>Pseudomonadota</taxon>
        <taxon>Gammaproteobacteria</taxon>
        <taxon>Pseudomonadales</taxon>
        <taxon>Pseudomonadaceae</taxon>
        <taxon>Pseudomonas</taxon>
    </lineage>
</organism>
<sequence>MPRSLKKGPFIDLHLLKKVEVAVEKNDRKPVKTWSRRSMILPQMVGLTIAVHNGRQHVPVLVNEDMVGHKLGEFAGTRTYRGHVADKKAKR</sequence>
<reference key="1">
    <citation type="submission" date="2007-05" db="EMBL/GenBank/DDBJ databases">
        <title>Complete sequence of Pseudomonas putida F1.</title>
        <authorList>
            <consortium name="US DOE Joint Genome Institute"/>
            <person name="Copeland A."/>
            <person name="Lucas S."/>
            <person name="Lapidus A."/>
            <person name="Barry K."/>
            <person name="Detter J.C."/>
            <person name="Glavina del Rio T."/>
            <person name="Hammon N."/>
            <person name="Israni S."/>
            <person name="Dalin E."/>
            <person name="Tice H."/>
            <person name="Pitluck S."/>
            <person name="Chain P."/>
            <person name="Malfatti S."/>
            <person name="Shin M."/>
            <person name="Vergez L."/>
            <person name="Schmutz J."/>
            <person name="Larimer F."/>
            <person name="Land M."/>
            <person name="Hauser L."/>
            <person name="Kyrpides N."/>
            <person name="Lykidis A."/>
            <person name="Parales R."/>
            <person name="Richardson P."/>
        </authorList>
    </citation>
    <scope>NUCLEOTIDE SEQUENCE [LARGE SCALE GENOMIC DNA]</scope>
    <source>
        <strain>ATCC 700007 / DSM 6899 / JCM 31910 / BCRC 17059 / LMG 24140 / F1</strain>
    </source>
</reference>
<comment type="function">
    <text evidence="1">Protein S19 forms a complex with S13 that binds strongly to the 16S ribosomal RNA.</text>
</comment>
<comment type="similarity">
    <text evidence="1">Belongs to the universal ribosomal protein uS19 family.</text>
</comment>
<dbReference type="EMBL" id="CP000712">
    <property type="protein sequence ID" value="ABQ76661.1"/>
    <property type="molecule type" value="Genomic_DNA"/>
</dbReference>
<dbReference type="SMR" id="A5VXQ1"/>
<dbReference type="KEGG" id="ppf:Pput_0491"/>
<dbReference type="eggNOG" id="COG0185">
    <property type="taxonomic scope" value="Bacteria"/>
</dbReference>
<dbReference type="HOGENOM" id="CLU_144911_0_1_6"/>
<dbReference type="GO" id="GO:0005737">
    <property type="term" value="C:cytoplasm"/>
    <property type="evidence" value="ECO:0007669"/>
    <property type="project" value="UniProtKB-ARBA"/>
</dbReference>
<dbReference type="GO" id="GO:0015935">
    <property type="term" value="C:small ribosomal subunit"/>
    <property type="evidence" value="ECO:0007669"/>
    <property type="project" value="InterPro"/>
</dbReference>
<dbReference type="GO" id="GO:0019843">
    <property type="term" value="F:rRNA binding"/>
    <property type="evidence" value="ECO:0007669"/>
    <property type="project" value="UniProtKB-UniRule"/>
</dbReference>
<dbReference type="GO" id="GO:0003735">
    <property type="term" value="F:structural constituent of ribosome"/>
    <property type="evidence" value="ECO:0007669"/>
    <property type="project" value="InterPro"/>
</dbReference>
<dbReference type="GO" id="GO:0000028">
    <property type="term" value="P:ribosomal small subunit assembly"/>
    <property type="evidence" value="ECO:0007669"/>
    <property type="project" value="TreeGrafter"/>
</dbReference>
<dbReference type="GO" id="GO:0006412">
    <property type="term" value="P:translation"/>
    <property type="evidence" value="ECO:0007669"/>
    <property type="project" value="UniProtKB-UniRule"/>
</dbReference>
<dbReference type="FunFam" id="3.30.860.10:FF:000001">
    <property type="entry name" value="30S ribosomal protein S19"/>
    <property type="match status" value="1"/>
</dbReference>
<dbReference type="Gene3D" id="3.30.860.10">
    <property type="entry name" value="30s Ribosomal Protein S19, Chain A"/>
    <property type="match status" value="1"/>
</dbReference>
<dbReference type="HAMAP" id="MF_00531">
    <property type="entry name" value="Ribosomal_uS19"/>
    <property type="match status" value="1"/>
</dbReference>
<dbReference type="InterPro" id="IPR002222">
    <property type="entry name" value="Ribosomal_uS19"/>
</dbReference>
<dbReference type="InterPro" id="IPR005732">
    <property type="entry name" value="Ribosomal_uS19_bac-type"/>
</dbReference>
<dbReference type="InterPro" id="IPR020934">
    <property type="entry name" value="Ribosomal_uS19_CS"/>
</dbReference>
<dbReference type="InterPro" id="IPR023575">
    <property type="entry name" value="Ribosomal_uS19_SF"/>
</dbReference>
<dbReference type="NCBIfam" id="TIGR01050">
    <property type="entry name" value="rpsS_bact"/>
    <property type="match status" value="1"/>
</dbReference>
<dbReference type="PANTHER" id="PTHR11880">
    <property type="entry name" value="RIBOSOMAL PROTEIN S19P FAMILY MEMBER"/>
    <property type="match status" value="1"/>
</dbReference>
<dbReference type="PANTHER" id="PTHR11880:SF8">
    <property type="entry name" value="SMALL RIBOSOMAL SUBUNIT PROTEIN US19M"/>
    <property type="match status" value="1"/>
</dbReference>
<dbReference type="Pfam" id="PF00203">
    <property type="entry name" value="Ribosomal_S19"/>
    <property type="match status" value="1"/>
</dbReference>
<dbReference type="PIRSF" id="PIRSF002144">
    <property type="entry name" value="Ribosomal_S19"/>
    <property type="match status" value="1"/>
</dbReference>
<dbReference type="PRINTS" id="PR00975">
    <property type="entry name" value="RIBOSOMALS19"/>
</dbReference>
<dbReference type="SUPFAM" id="SSF54570">
    <property type="entry name" value="Ribosomal protein S19"/>
    <property type="match status" value="1"/>
</dbReference>
<dbReference type="PROSITE" id="PS00323">
    <property type="entry name" value="RIBOSOMAL_S19"/>
    <property type="match status" value="1"/>
</dbReference>
<accession>A5VXQ1</accession>
<protein>
    <recommendedName>
        <fullName evidence="1">Small ribosomal subunit protein uS19</fullName>
    </recommendedName>
    <alternativeName>
        <fullName evidence="2">30S ribosomal protein S19</fullName>
    </alternativeName>
</protein>
<gene>
    <name evidence="1" type="primary">rpsS</name>
    <name type="ordered locus">Pput_0491</name>
</gene>